<dbReference type="EMBL" id="AL591982">
    <property type="protein sequence ID" value="CAD00284.1"/>
    <property type="molecule type" value="Genomic_DNA"/>
</dbReference>
<dbReference type="PIR" id="AF1350">
    <property type="entry name" value="AF1350"/>
</dbReference>
<dbReference type="RefSeq" id="NP_465730.1">
    <property type="nucleotide sequence ID" value="NC_003210.1"/>
</dbReference>
<dbReference type="RefSeq" id="WP_003723824.1">
    <property type="nucleotide sequence ID" value="NZ_CP149495.1"/>
</dbReference>
<dbReference type="SMR" id="Q8Y570"/>
<dbReference type="STRING" id="169963.gene:17594897"/>
<dbReference type="PaxDb" id="169963-lmo2206"/>
<dbReference type="EnsemblBacteria" id="CAD00284">
    <property type="protein sequence ID" value="CAD00284"/>
    <property type="gene ID" value="CAD00284"/>
</dbReference>
<dbReference type="GeneID" id="985416"/>
<dbReference type="KEGG" id="lmo:lmo2206"/>
<dbReference type="PATRIC" id="fig|169963.11.peg.2258"/>
<dbReference type="eggNOG" id="COG0542">
    <property type="taxonomic scope" value="Bacteria"/>
</dbReference>
<dbReference type="HOGENOM" id="CLU_005070_4_0_9"/>
<dbReference type="OrthoDB" id="9803641at2"/>
<dbReference type="PhylomeDB" id="Q8Y570"/>
<dbReference type="BioCyc" id="LMON169963:LMO2206-MONOMER"/>
<dbReference type="Proteomes" id="UP000000817">
    <property type="component" value="Chromosome"/>
</dbReference>
<dbReference type="GO" id="GO:0005737">
    <property type="term" value="C:cytoplasm"/>
    <property type="evidence" value="ECO:0000318"/>
    <property type="project" value="GO_Central"/>
</dbReference>
<dbReference type="GO" id="GO:0005524">
    <property type="term" value="F:ATP binding"/>
    <property type="evidence" value="ECO:0007669"/>
    <property type="project" value="UniProtKB-KW"/>
</dbReference>
<dbReference type="GO" id="GO:0016887">
    <property type="term" value="F:ATP hydrolysis activity"/>
    <property type="evidence" value="ECO:0000318"/>
    <property type="project" value="GO_Central"/>
</dbReference>
<dbReference type="GO" id="GO:0034605">
    <property type="term" value="P:cellular response to heat"/>
    <property type="evidence" value="ECO:0000318"/>
    <property type="project" value="GO_Central"/>
</dbReference>
<dbReference type="GO" id="GO:0042026">
    <property type="term" value="P:protein refolding"/>
    <property type="evidence" value="ECO:0007669"/>
    <property type="project" value="InterPro"/>
</dbReference>
<dbReference type="CDD" id="cd00009">
    <property type="entry name" value="AAA"/>
    <property type="match status" value="1"/>
</dbReference>
<dbReference type="CDD" id="cd19499">
    <property type="entry name" value="RecA-like_ClpB_Hsp104-like"/>
    <property type="match status" value="1"/>
</dbReference>
<dbReference type="FunFam" id="1.10.8.60:FF:000017">
    <property type="entry name" value="ATP-dependent chaperone ClpB"/>
    <property type="match status" value="1"/>
</dbReference>
<dbReference type="FunFam" id="3.40.50.300:FF:000120">
    <property type="entry name" value="ATP-dependent chaperone ClpB"/>
    <property type="match status" value="1"/>
</dbReference>
<dbReference type="FunFam" id="3.40.50.300:FF:000025">
    <property type="entry name" value="ATP-dependent Clp protease subunit"/>
    <property type="match status" value="1"/>
</dbReference>
<dbReference type="FunFam" id="3.40.50.300:FF:000010">
    <property type="entry name" value="Chaperone clpB 1, putative"/>
    <property type="match status" value="1"/>
</dbReference>
<dbReference type="Gene3D" id="1.10.8.60">
    <property type="match status" value="1"/>
</dbReference>
<dbReference type="Gene3D" id="1.10.1780.10">
    <property type="entry name" value="Clp, N-terminal domain"/>
    <property type="match status" value="1"/>
</dbReference>
<dbReference type="Gene3D" id="3.40.50.300">
    <property type="entry name" value="P-loop containing nucleotide triphosphate hydrolases"/>
    <property type="match status" value="3"/>
</dbReference>
<dbReference type="InterPro" id="IPR003593">
    <property type="entry name" value="AAA+_ATPase"/>
</dbReference>
<dbReference type="InterPro" id="IPR003959">
    <property type="entry name" value="ATPase_AAA_core"/>
</dbReference>
<dbReference type="InterPro" id="IPR017730">
    <property type="entry name" value="Chaperonin_ClpB"/>
</dbReference>
<dbReference type="InterPro" id="IPR019489">
    <property type="entry name" value="Clp_ATPase_C"/>
</dbReference>
<dbReference type="InterPro" id="IPR036628">
    <property type="entry name" value="Clp_N_dom_sf"/>
</dbReference>
<dbReference type="InterPro" id="IPR004176">
    <property type="entry name" value="Clp_R_dom"/>
</dbReference>
<dbReference type="InterPro" id="IPR001270">
    <property type="entry name" value="ClpA/B"/>
</dbReference>
<dbReference type="InterPro" id="IPR018368">
    <property type="entry name" value="ClpA/B_CS1"/>
</dbReference>
<dbReference type="InterPro" id="IPR028299">
    <property type="entry name" value="ClpA/B_CS2"/>
</dbReference>
<dbReference type="InterPro" id="IPR041546">
    <property type="entry name" value="ClpA/ClpB_AAA_lid"/>
</dbReference>
<dbReference type="InterPro" id="IPR050130">
    <property type="entry name" value="ClpA_ClpB"/>
</dbReference>
<dbReference type="InterPro" id="IPR027417">
    <property type="entry name" value="P-loop_NTPase"/>
</dbReference>
<dbReference type="NCBIfam" id="TIGR03346">
    <property type="entry name" value="chaperone_ClpB"/>
    <property type="match status" value="1"/>
</dbReference>
<dbReference type="PANTHER" id="PTHR11638">
    <property type="entry name" value="ATP-DEPENDENT CLP PROTEASE"/>
    <property type="match status" value="1"/>
</dbReference>
<dbReference type="PANTHER" id="PTHR11638:SF18">
    <property type="entry name" value="HEAT SHOCK PROTEIN 104"/>
    <property type="match status" value="1"/>
</dbReference>
<dbReference type="Pfam" id="PF00004">
    <property type="entry name" value="AAA"/>
    <property type="match status" value="1"/>
</dbReference>
<dbReference type="Pfam" id="PF07724">
    <property type="entry name" value="AAA_2"/>
    <property type="match status" value="1"/>
</dbReference>
<dbReference type="Pfam" id="PF17871">
    <property type="entry name" value="AAA_lid_9"/>
    <property type="match status" value="1"/>
</dbReference>
<dbReference type="Pfam" id="PF02861">
    <property type="entry name" value="Clp_N"/>
    <property type="match status" value="2"/>
</dbReference>
<dbReference type="Pfam" id="PF10431">
    <property type="entry name" value="ClpB_D2-small"/>
    <property type="match status" value="1"/>
</dbReference>
<dbReference type="PRINTS" id="PR00300">
    <property type="entry name" value="CLPPROTEASEA"/>
</dbReference>
<dbReference type="SMART" id="SM00382">
    <property type="entry name" value="AAA"/>
    <property type="match status" value="2"/>
</dbReference>
<dbReference type="SMART" id="SM01086">
    <property type="entry name" value="ClpB_D2-small"/>
    <property type="match status" value="1"/>
</dbReference>
<dbReference type="SUPFAM" id="SSF81923">
    <property type="entry name" value="Double Clp-N motif"/>
    <property type="match status" value="1"/>
</dbReference>
<dbReference type="SUPFAM" id="SSF52540">
    <property type="entry name" value="P-loop containing nucleoside triphosphate hydrolases"/>
    <property type="match status" value="2"/>
</dbReference>
<dbReference type="PROSITE" id="PS51903">
    <property type="entry name" value="CLP_R"/>
    <property type="match status" value="1"/>
</dbReference>
<dbReference type="PROSITE" id="PS00870">
    <property type="entry name" value="CLPAB_1"/>
    <property type="match status" value="1"/>
</dbReference>
<dbReference type="PROSITE" id="PS00871">
    <property type="entry name" value="CLPAB_2"/>
    <property type="match status" value="1"/>
</dbReference>
<evidence type="ECO:0000250" key="1"/>
<evidence type="ECO:0000255" key="2">
    <source>
        <dbReference type="PROSITE-ProRule" id="PRU01251"/>
    </source>
</evidence>
<evidence type="ECO:0000269" key="3">
    <source>
    </source>
</evidence>
<evidence type="ECO:0000305" key="4"/>
<gene>
    <name type="primary">clpB</name>
    <name type="ordered locus">lmo2206</name>
</gene>
<organism>
    <name type="scientific">Listeria monocytogenes serovar 1/2a (strain ATCC BAA-679 / EGD-e)</name>
    <dbReference type="NCBI Taxonomy" id="169963"/>
    <lineage>
        <taxon>Bacteria</taxon>
        <taxon>Bacillati</taxon>
        <taxon>Bacillota</taxon>
        <taxon>Bacilli</taxon>
        <taxon>Bacillales</taxon>
        <taxon>Listeriaceae</taxon>
        <taxon>Listeria</taxon>
    </lineage>
</organism>
<name>CLPB_LISMO</name>
<accession>Q8Y570</accession>
<reference key="1">
    <citation type="journal article" date="2001" name="Science">
        <title>Comparative genomics of Listeria species.</title>
        <authorList>
            <person name="Glaser P."/>
            <person name="Frangeul L."/>
            <person name="Buchrieser C."/>
            <person name="Rusniok C."/>
            <person name="Amend A."/>
            <person name="Baquero F."/>
            <person name="Berche P."/>
            <person name="Bloecker H."/>
            <person name="Brandt P."/>
            <person name="Chakraborty T."/>
            <person name="Charbit A."/>
            <person name="Chetouani F."/>
            <person name="Couve E."/>
            <person name="de Daruvar A."/>
            <person name="Dehoux P."/>
            <person name="Domann E."/>
            <person name="Dominguez-Bernal G."/>
            <person name="Duchaud E."/>
            <person name="Durant L."/>
            <person name="Dussurget O."/>
            <person name="Entian K.-D."/>
            <person name="Fsihi H."/>
            <person name="Garcia-del Portillo F."/>
            <person name="Garrido P."/>
            <person name="Gautier L."/>
            <person name="Goebel W."/>
            <person name="Gomez-Lopez N."/>
            <person name="Hain T."/>
            <person name="Hauf J."/>
            <person name="Jackson D."/>
            <person name="Jones L.-M."/>
            <person name="Kaerst U."/>
            <person name="Kreft J."/>
            <person name="Kuhn M."/>
            <person name="Kunst F."/>
            <person name="Kurapkat G."/>
            <person name="Madueno E."/>
            <person name="Maitournam A."/>
            <person name="Mata Vicente J."/>
            <person name="Ng E."/>
            <person name="Nedjari H."/>
            <person name="Nordsiek G."/>
            <person name="Novella S."/>
            <person name="de Pablos B."/>
            <person name="Perez-Diaz J.-C."/>
            <person name="Purcell R."/>
            <person name="Remmel B."/>
            <person name="Rose M."/>
            <person name="Schlueter T."/>
            <person name="Simoes N."/>
            <person name="Tierrez A."/>
            <person name="Vazquez-Boland J.-A."/>
            <person name="Voss H."/>
            <person name="Wehland J."/>
            <person name="Cossart P."/>
        </authorList>
    </citation>
    <scope>NUCLEOTIDE SEQUENCE [LARGE SCALE GENOMIC DNA]</scope>
    <source>
        <strain>ATCC BAA-679 / EGD-e</strain>
    </source>
</reference>
<reference key="2">
    <citation type="journal article" date="2004" name="J. Bacteriol.">
        <title>clpB, a novel member of the Listeria monocytogenes CtsR regulon, is involved in virulence but not in general stress tolerance.</title>
        <authorList>
            <person name="Chastanet A."/>
            <person name="Derre I."/>
            <person name="Nair S."/>
            <person name="Msadek T."/>
        </authorList>
    </citation>
    <scope>FUNCTION IN VIRULENCE</scope>
    <source>
        <strain>LO28 / Serovar 1/2c</strain>
    </source>
</reference>
<proteinExistence type="evidence at protein level"/>
<comment type="function">
    <text evidence="1 3">Part of a stress-induced multi-chaperone system, it is involved in the recovery of the cell from heat-induced damage, in cooperation with DnaK, DnaJ and GrpE. Acts before DnaK, in the processing of protein aggregates. Protein binding stimulates the ATPase activity; ATP hydrolysis unfolds the denatured protein aggregates, which probably helps expose new hydrophobic binding sites on the surface of ClpB-bound aggregates, contributing to the solubilization and refolding of denatured protein aggregates by DnaK (By similarity). Required for induced thermotolerance, but not for general stress survival. Involved in virulence, maybe acting as a chaperone in a key process for pathogenic development.</text>
</comment>
<comment type="subunit">
    <text evidence="1">Homohexamer. The oligomerization is ATP-dependent (By similarity).</text>
</comment>
<comment type="subcellular location">
    <subcellularLocation>
        <location evidence="4">Cytoplasm</location>
    </subcellularLocation>
</comment>
<comment type="domain">
    <text evidence="1">The Clp repeat (R) domain probably functions as a substrate-discriminating domain, recruiting aggregated proteins to the ClpB hexamer and/or stabilizing bound proteins. The NBD2 domain is responsible for oligomerization, whereas the NBD1 domain stabilizes the hexamer probably in an ATP-dependent manner. The movement of the coiled-coil domain is essential for ClpB ability to rescue proteins from an aggregated state, probably by pulling apart large aggregated proteins, which are bound between the coiled-coils motifs of adjacent ClpB subunits in the functional hexamer (By similarity).</text>
</comment>
<comment type="similarity">
    <text evidence="4">Belongs to the ClpA/ClpB family.</text>
</comment>
<sequence>MDLQKFTQQVQQTIADAQNLAIASEHQEIDVAHVFKVLLTESDFAKRVYDVAEVDTDALQKVIENTLEKIPVVSGSGVNYGQAMSQALFQLMRDAEKEQQQLEDDFVSTEHLILAVMDQKSNPITAELKNQHKAKKQIKEAILKIRGGKRVTSQNAEENYEALTKYGRDLVAEVRSGKLDPVIGRDAEIRNVIRILSRKTKNNPVLIGEPGVGKTAIVEGLAQRIVRKDVPEGLKDKTIISLDIGSLIAGAKYRGEFEERLKAVLQEVKQSDGQILLFIDEIHTIVGAGKTDGAMDAGNMLKPMLARGELHCIGATTLDEYRQYIEKDAALERRFQKVLVPEPTVEDTVSILRGLKERFEIHHGVNIHDNALVAAASLSNRYITDRFLPDKAIDLVDEACATIRVEIDSMPSELDEVTRKVMQLEIEEAALKEEKDPASERRLEILQRELADYKEEANQMKSKWESEKNEISKIREVREQIDHLRHELEEAENNYDLNKAAELRHGRIPAVEKELLELEAENREKTAQEDRILQEEVTENEIAEIVGRWTGIPVTKLVEGEREKLLKLADVLHQKVIGQDDAVQLVSDAVLRARAGIKDPKRPIGSFIFLGPTGVGKTELAKALAFNMFDSEDHMIRIDMSEYMEKHSVSRLVGAPPGYIGYEEGGQLTEAVRRNPYSIVLLDEIEKAHPDVFNILLQVLDDGRITDSQGRLIDFKNTVIIMTSNIGSNLLLERTEEGEISPELESDVMQILQSEFKPEFLNRVDDIILFKPLTLADIKGIVEKLVEELQIRLADQEITITISDDAKAFIAEEAYDPVYGARPLKRYIVRHVETPLAREIVSGKIMPHSSVEIDLADKEFTFKVTE</sequence>
<keyword id="KW-0067">ATP-binding</keyword>
<keyword id="KW-0143">Chaperone</keyword>
<keyword id="KW-0175">Coiled coil</keyword>
<keyword id="KW-0963">Cytoplasm</keyword>
<keyword id="KW-0547">Nucleotide-binding</keyword>
<keyword id="KW-1185">Reference proteome</keyword>
<keyword id="KW-0677">Repeat</keyword>
<keyword id="KW-0346">Stress response</keyword>
<protein>
    <recommendedName>
        <fullName>Chaperone protein ClpB</fullName>
    </recommendedName>
</protein>
<feature type="chain" id="PRO_0000191137" description="Chaperone protein ClpB">
    <location>
        <begin position="1"/>
        <end position="866"/>
    </location>
</feature>
<feature type="domain" description="Clp R" evidence="2">
    <location>
        <begin position="3"/>
        <end position="148"/>
    </location>
</feature>
<feature type="region of interest" description="Repeat 1" evidence="2">
    <location>
        <begin position="6"/>
        <end position="70"/>
    </location>
</feature>
<feature type="region of interest" description="Repeat 2" evidence="2">
    <location>
        <begin position="84"/>
        <end position="148"/>
    </location>
</feature>
<feature type="region of interest" description="NBD1" evidence="1">
    <location>
        <begin position="161"/>
        <end position="342"/>
    </location>
</feature>
<feature type="region of interest" description="Linker" evidence="1">
    <location>
        <begin position="343"/>
        <end position="551"/>
    </location>
</feature>
<feature type="region of interest" description="NBD2" evidence="1">
    <location>
        <begin position="561"/>
        <end position="772"/>
    </location>
</feature>
<feature type="region of interest" description="C-terminal" evidence="1">
    <location>
        <begin position="773"/>
        <end position="866"/>
    </location>
</feature>
<feature type="coiled-coil region" evidence="1">
    <location>
        <begin position="393"/>
        <end position="527"/>
    </location>
</feature>
<feature type="binding site" evidence="1">
    <location>
        <begin position="208"/>
        <end position="215"/>
    </location>
    <ligand>
        <name>ATP</name>
        <dbReference type="ChEBI" id="CHEBI:30616"/>
        <label>1</label>
    </ligand>
</feature>
<feature type="binding site" evidence="1">
    <location>
        <begin position="611"/>
        <end position="618"/>
    </location>
    <ligand>
        <name>ATP</name>
        <dbReference type="ChEBI" id="CHEBI:30616"/>
        <label>2</label>
    </ligand>
</feature>